<accession>P0DG94</accession>
<accession>P67364</accession>
<accession>Q99ZF8</accession>
<feature type="chain" id="PRO_0000216699" description="UPF0223 protein SpyM3_0884">
    <location>
        <begin position="1"/>
        <end position="92"/>
    </location>
</feature>
<evidence type="ECO:0000255" key="1">
    <source>
        <dbReference type="HAMAP-Rule" id="MF_01041"/>
    </source>
</evidence>
<comment type="similarity">
    <text evidence="1">Belongs to the UPF0223 family.</text>
</comment>
<protein>
    <recommendedName>
        <fullName evidence="1">UPF0223 protein SpyM3_0884</fullName>
    </recommendedName>
</protein>
<proteinExistence type="inferred from homology"/>
<dbReference type="EMBL" id="AE014074">
    <property type="protein sequence ID" value="AAM79491.1"/>
    <property type="molecule type" value="Genomic_DNA"/>
</dbReference>
<dbReference type="RefSeq" id="WP_002984497.1">
    <property type="nucleotide sequence ID" value="NC_004070.1"/>
</dbReference>
<dbReference type="SMR" id="P0DG94"/>
<dbReference type="KEGG" id="spg:SpyM3_0884"/>
<dbReference type="HOGENOM" id="CLU_166693_0_0_9"/>
<dbReference type="Proteomes" id="UP000000564">
    <property type="component" value="Chromosome"/>
</dbReference>
<dbReference type="Gene3D" id="1.10.220.80">
    <property type="entry name" value="BH2638-like"/>
    <property type="match status" value="1"/>
</dbReference>
<dbReference type="HAMAP" id="MF_01041">
    <property type="entry name" value="UPF0223"/>
    <property type="match status" value="1"/>
</dbReference>
<dbReference type="InterPro" id="IPR023324">
    <property type="entry name" value="BH2638-like_sf"/>
</dbReference>
<dbReference type="InterPro" id="IPR007920">
    <property type="entry name" value="UPF0223"/>
</dbReference>
<dbReference type="NCBIfam" id="NF003353">
    <property type="entry name" value="PRK04387.1"/>
    <property type="match status" value="1"/>
</dbReference>
<dbReference type="Pfam" id="PF05256">
    <property type="entry name" value="UPF0223"/>
    <property type="match status" value="1"/>
</dbReference>
<dbReference type="PIRSF" id="PIRSF037260">
    <property type="entry name" value="UPF0223"/>
    <property type="match status" value="1"/>
</dbReference>
<dbReference type="SUPFAM" id="SSF158504">
    <property type="entry name" value="BH2638-like"/>
    <property type="match status" value="1"/>
</dbReference>
<name>Y884_STRP3</name>
<organism>
    <name type="scientific">Streptococcus pyogenes serotype M3 (strain ATCC BAA-595 / MGAS315)</name>
    <dbReference type="NCBI Taxonomy" id="198466"/>
    <lineage>
        <taxon>Bacteria</taxon>
        <taxon>Bacillati</taxon>
        <taxon>Bacillota</taxon>
        <taxon>Bacilli</taxon>
        <taxon>Lactobacillales</taxon>
        <taxon>Streptococcaceae</taxon>
        <taxon>Streptococcus</taxon>
    </lineage>
</organism>
<gene>
    <name type="ordered locus">SpyM3_0884</name>
</gene>
<sequence>MSGNYYYPLDLSWSTEEISSVLHFLNKVELAYEKKVDAKQLLDSYKTYKTIVKSKAQEKQIDRDFQKVSGYSTYQVVKKAKAIEKGFFSLGN</sequence>
<reference key="1">
    <citation type="journal article" date="2002" name="Proc. Natl. Acad. Sci. U.S.A.">
        <title>Genome sequence of a serotype M3 strain of group A Streptococcus: phage-encoded toxins, the high-virulence phenotype, and clone emergence.</title>
        <authorList>
            <person name="Beres S.B."/>
            <person name="Sylva G.L."/>
            <person name="Barbian K.D."/>
            <person name="Lei B."/>
            <person name="Hoff J.S."/>
            <person name="Mammarella N.D."/>
            <person name="Liu M.-Y."/>
            <person name="Smoot J.C."/>
            <person name="Porcella S.F."/>
            <person name="Parkins L.D."/>
            <person name="Campbell D.S."/>
            <person name="Smith T.M."/>
            <person name="McCormick J.K."/>
            <person name="Leung D.Y.M."/>
            <person name="Schlievert P.M."/>
            <person name="Musser J.M."/>
        </authorList>
    </citation>
    <scope>NUCLEOTIDE SEQUENCE [LARGE SCALE GENOMIC DNA]</scope>
    <source>
        <strain>ATCC BAA-595 / MGAS315</strain>
    </source>
</reference>